<dbReference type="EC" id="5.3.1.12" evidence="1"/>
<dbReference type="EMBL" id="CP000918">
    <property type="protein sequence ID" value="ACO17839.1"/>
    <property type="molecule type" value="Genomic_DNA"/>
</dbReference>
<dbReference type="RefSeq" id="WP_000009387.1">
    <property type="nucleotide sequence ID" value="NC_012468.1"/>
</dbReference>
<dbReference type="SMR" id="C1CAV7"/>
<dbReference type="KEGG" id="snm:SP70585_2238"/>
<dbReference type="HOGENOM" id="CLU_044465_1_0_9"/>
<dbReference type="UniPathway" id="UPA00246"/>
<dbReference type="Proteomes" id="UP000002211">
    <property type="component" value="Chromosome"/>
</dbReference>
<dbReference type="GO" id="GO:0008880">
    <property type="term" value="F:glucuronate isomerase activity"/>
    <property type="evidence" value="ECO:0007669"/>
    <property type="project" value="UniProtKB-UniRule"/>
</dbReference>
<dbReference type="GO" id="GO:0019698">
    <property type="term" value="P:D-galacturonate catabolic process"/>
    <property type="evidence" value="ECO:0007669"/>
    <property type="project" value="TreeGrafter"/>
</dbReference>
<dbReference type="GO" id="GO:0042840">
    <property type="term" value="P:D-glucuronate catabolic process"/>
    <property type="evidence" value="ECO:0007669"/>
    <property type="project" value="TreeGrafter"/>
</dbReference>
<dbReference type="Gene3D" id="3.20.20.140">
    <property type="entry name" value="Metal-dependent hydrolases"/>
    <property type="match status" value="1"/>
</dbReference>
<dbReference type="Gene3D" id="1.10.2020.10">
    <property type="entry name" value="uronate isomerase, domain 2, chain A"/>
    <property type="match status" value="1"/>
</dbReference>
<dbReference type="HAMAP" id="MF_00675">
    <property type="entry name" value="UxaC"/>
    <property type="match status" value="1"/>
</dbReference>
<dbReference type="InterPro" id="IPR032466">
    <property type="entry name" value="Metal_Hydrolase"/>
</dbReference>
<dbReference type="InterPro" id="IPR003766">
    <property type="entry name" value="Uronate_isomerase"/>
</dbReference>
<dbReference type="NCBIfam" id="NF002794">
    <property type="entry name" value="PRK02925.1"/>
    <property type="match status" value="1"/>
</dbReference>
<dbReference type="PANTHER" id="PTHR30068">
    <property type="entry name" value="URONATE ISOMERASE"/>
    <property type="match status" value="1"/>
</dbReference>
<dbReference type="PANTHER" id="PTHR30068:SF4">
    <property type="entry name" value="URONATE ISOMERASE"/>
    <property type="match status" value="1"/>
</dbReference>
<dbReference type="Pfam" id="PF02614">
    <property type="entry name" value="UxaC"/>
    <property type="match status" value="1"/>
</dbReference>
<dbReference type="SUPFAM" id="SSF51556">
    <property type="entry name" value="Metallo-dependent hydrolases"/>
    <property type="match status" value="1"/>
</dbReference>
<name>UXAC_STRP7</name>
<gene>
    <name evidence="1" type="primary">uxaC</name>
    <name type="ordered locus">SP70585_2238</name>
</gene>
<organism>
    <name type="scientific">Streptococcus pneumoniae (strain 70585)</name>
    <dbReference type="NCBI Taxonomy" id="488221"/>
    <lineage>
        <taxon>Bacteria</taxon>
        <taxon>Bacillati</taxon>
        <taxon>Bacillota</taxon>
        <taxon>Bacilli</taxon>
        <taxon>Lactobacillales</taxon>
        <taxon>Streptococcaceae</taxon>
        <taxon>Streptococcus</taxon>
    </lineage>
</organism>
<feature type="chain" id="PRO_1000147693" description="Uronate isomerase">
    <location>
        <begin position="1"/>
        <end position="466"/>
    </location>
</feature>
<keyword id="KW-0413">Isomerase</keyword>
<accession>C1CAV7</accession>
<evidence type="ECO:0000255" key="1">
    <source>
        <dbReference type="HAMAP-Rule" id="MF_00675"/>
    </source>
</evidence>
<reference key="1">
    <citation type="journal article" date="2010" name="Genome Biol.">
        <title>Structure and dynamics of the pan-genome of Streptococcus pneumoniae and closely related species.</title>
        <authorList>
            <person name="Donati C."/>
            <person name="Hiller N.L."/>
            <person name="Tettelin H."/>
            <person name="Muzzi A."/>
            <person name="Croucher N.J."/>
            <person name="Angiuoli S.V."/>
            <person name="Oggioni M."/>
            <person name="Dunning Hotopp J.C."/>
            <person name="Hu F.Z."/>
            <person name="Riley D.R."/>
            <person name="Covacci A."/>
            <person name="Mitchell T.J."/>
            <person name="Bentley S.D."/>
            <person name="Kilian M."/>
            <person name="Ehrlich G.D."/>
            <person name="Rappuoli R."/>
            <person name="Moxon E.R."/>
            <person name="Masignani V."/>
        </authorList>
    </citation>
    <scope>NUCLEOTIDE SEQUENCE [LARGE SCALE GENOMIC DNA]</scope>
    <source>
        <strain>70585</strain>
    </source>
</reference>
<proteinExistence type="inferred from homology"/>
<comment type="catalytic activity">
    <reaction evidence="1">
        <text>D-glucuronate = D-fructuronate</text>
        <dbReference type="Rhea" id="RHEA:13049"/>
        <dbReference type="ChEBI" id="CHEBI:58720"/>
        <dbReference type="ChEBI" id="CHEBI:59863"/>
        <dbReference type="EC" id="5.3.1.12"/>
    </reaction>
</comment>
<comment type="catalytic activity">
    <reaction evidence="1">
        <text>aldehydo-D-galacturonate = keto-D-tagaturonate</text>
        <dbReference type="Rhea" id="RHEA:27702"/>
        <dbReference type="ChEBI" id="CHEBI:12952"/>
        <dbReference type="ChEBI" id="CHEBI:17886"/>
        <dbReference type="EC" id="5.3.1.12"/>
    </reaction>
</comment>
<comment type="pathway">
    <text evidence="1">Carbohydrate metabolism; pentose and glucuronate interconversion.</text>
</comment>
<comment type="similarity">
    <text evidence="1">Belongs to the metallo-dependent hydrolases superfamily. Uronate isomerase family.</text>
</comment>
<sequence length="466" mass="54125">MSFNDKNFMLKNEPAKELYVKIAELPIYDFHCHLDPKEIFEDKVYEDIVDLWLGGDHYKWRLMRANGISEEEITGFASKLDKFKAWARTLERAFGNPLYHWSHLELRQVFGIEELLTEENAERLYHQLNTYLQEHQISPRKLIADARVAFIGTTDHPLDNLEWHKRLAEDSPIDTVVAPTFRPDEAFIEHRNFNLFIKRLEEVTEVAVRDFASFVEALGQRVSYFAQHGCRASDISFTAITYEEATLEELNDILLARMVGKEVGQSGINKWQTAIFRELCRMYKKHGFVTQVHFGALRNNHTGLFEKLGADVGVDSIGDQTCLTGNLNRLLDNLVKENALPKMIWYNLNPGYNIALANTLANFQANEEGRRSQLQFGAGWWFNDTKLGMIDQMNAYAEQGMLANFVGMLTDSRSFLSYQRHDYFRRILATYVGQWIVDEEVPEDYDRLGQFVEAISYYNAKEFFEQ</sequence>
<protein>
    <recommendedName>
        <fullName evidence="1">Uronate isomerase</fullName>
        <ecNumber evidence="1">5.3.1.12</ecNumber>
    </recommendedName>
    <alternativeName>
        <fullName evidence="1">Glucuronate isomerase</fullName>
    </alternativeName>
    <alternativeName>
        <fullName evidence="1">Uronic isomerase</fullName>
    </alternativeName>
</protein>